<gene>
    <name evidence="1" type="primary">uppS</name>
    <name type="ordered locus">XCC1369</name>
</gene>
<protein>
    <recommendedName>
        <fullName evidence="1">Ditrans,polycis-undecaprenyl-diphosphate synthase ((2E,6E)-farnesyl-diphosphate specific)</fullName>
        <ecNumber evidence="1">2.5.1.31</ecNumber>
    </recommendedName>
    <alternativeName>
        <fullName evidence="1">Ditrans,polycis-undecaprenylcistransferase</fullName>
    </alternativeName>
    <alternativeName>
        <fullName evidence="1">Undecaprenyl diphosphate synthase</fullName>
        <shortName evidence="1">UDS</shortName>
    </alternativeName>
    <alternativeName>
        <fullName evidence="1">Undecaprenyl pyrophosphate synthase</fullName>
        <shortName evidence="1">UPP synthase</shortName>
    </alternativeName>
</protein>
<comment type="function">
    <text evidence="1">Catalyzes the sequential condensation of isopentenyl diphosphate (IPP) with (2E,6E)-farnesyl diphosphate (E,E-FPP) to yield (2Z,6Z,10Z,14Z,18Z,22Z,26Z,30Z,34E,38E)-undecaprenyl diphosphate (di-trans,octa-cis-UPP). UPP is the precursor of glycosyl carrier lipid in the biosynthesis of bacterial cell wall polysaccharide components such as peptidoglycan and lipopolysaccharide.</text>
</comment>
<comment type="catalytic activity">
    <reaction evidence="1">
        <text>8 isopentenyl diphosphate + (2E,6E)-farnesyl diphosphate = di-trans,octa-cis-undecaprenyl diphosphate + 8 diphosphate</text>
        <dbReference type="Rhea" id="RHEA:27551"/>
        <dbReference type="ChEBI" id="CHEBI:33019"/>
        <dbReference type="ChEBI" id="CHEBI:58405"/>
        <dbReference type="ChEBI" id="CHEBI:128769"/>
        <dbReference type="ChEBI" id="CHEBI:175763"/>
        <dbReference type="EC" id="2.5.1.31"/>
    </reaction>
</comment>
<comment type="cofactor">
    <cofactor evidence="1">
        <name>Mg(2+)</name>
        <dbReference type="ChEBI" id="CHEBI:18420"/>
    </cofactor>
    <text evidence="1">Binds 2 magnesium ions per subunit.</text>
</comment>
<comment type="subunit">
    <text evidence="1">Homodimer.</text>
</comment>
<comment type="similarity">
    <text evidence="1">Belongs to the UPP synthase family.</text>
</comment>
<evidence type="ECO:0000255" key="1">
    <source>
        <dbReference type="HAMAP-Rule" id="MF_01139"/>
    </source>
</evidence>
<feature type="chain" id="PRO_0000123719" description="Ditrans,polycis-undecaprenyl-diphosphate synthase ((2E,6E)-farnesyl-diphosphate specific)">
    <location>
        <begin position="1"/>
        <end position="258"/>
    </location>
</feature>
<feature type="active site" evidence="1">
    <location>
        <position position="24"/>
    </location>
</feature>
<feature type="active site" description="Proton acceptor" evidence="1">
    <location>
        <position position="72"/>
    </location>
</feature>
<feature type="binding site" evidence="1">
    <location>
        <position position="24"/>
    </location>
    <ligand>
        <name>Mg(2+)</name>
        <dbReference type="ChEBI" id="CHEBI:18420"/>
    </ligand>
</feature>
<feature type="binding site" evidence="1">
    <location>
        <begin position="25"/>
        <end position="28"/>
    </location>
    <ligand>
        <name>substrate</name>
    </ligand>
</feature>
<feature type="binding site" evidence="1">
    <location>
        <position position="29"/>
    </location>
    <ligand>
        <name>substrate</name>
    </ligand>
</feature>
<feature type="binding site" evidence="1">
    <location>
        <position position="37"/>
    </location>
    <ligand>
        <name>substrate</name>
    </ligand>
</feature>
<feature type="binding site" evidence="1">
    <location>
        <position position="41"/>
    </location>
    <ligand>
        <name>substrate</name>
    </ligand>
</feature>
<feature type="binding site" evidence="1">
    <location>
        <begin position="69"/>
        <end position="71"/>
    </location>
    <ligand>
        <name>substrate</name>
    </ligand>
</feature>
<feature type="binding site" evidence="1">
    <location>
        <position position="73"/>
    </location>
    <ligand>
        <name>substrate</name>
    </ligand>
</feature>
<feature type="binding site" evidence="1">
    <location>
        <position position="75"/>
    </location>
    <ligand>
        <name>substrate</name>
    </ligand>
</feature>
<feature type="binding site" evidence="1">
    <location>
        <position position="192"/>
    </location>
    <ligand>
        <name>substrate</name>
    </ligand>
</feature>
<feature type="binding site" evidence="1">
    <location>
        <begin position="198"/>
        <end position="200"/>
    </location>
    <ligand>
        <name>substrate</name>
    </ligand>
</feature>
<feature type="binding site" evidence="1">
    <location>
        <position position="211"/>
    </location>
    <ligand>
        <name>Mg(2+)</name>
        <dbReference type="ChEBI" id="CHEBI:18420"/>
    </ligand>
</feature>
<name>UPPS_XANCP</name>
<keyword id="KW-0133">Cell shape</keyword>
<keyword id="KW-0961">Cell wall biogenesis/degradation</keyword>
<keyword id="KW-0460">Magnesium</keyword>
<keyword id="KW-0479">Metal-binding</keyword>
<keyword id="KW-0573">Peptidoglycan synthesis</keyword>
<keyword id="KW-1185">Reference proteome</keyword>
<keyword id="KW-0808">Transferase</keyword>
<sequence>MASTAMHSEPSAAAVPRHLAIIMDGNGRWAQRRRRPRVIGHRAGARAVNRTIDFCLDKGVSALTLFAFSSENWGRPQDEVDALMKLFLHALDRGVEELQRRGVQVRFIGDRSRFTAPLRDRMAGAERITAANTRLVLSIAASYGGRQDIAMAARALAVEVAAGRLQPEQIDEALLASRVALADLPAPDLFIRTGGDTRISNFLLWQLAYTELWFTETLWPEFDAGVLQQALDDYAGRERRFGLTSAQIAEKATEASSA</sequence>
<accession>Q8PAV7</accession>
<reference key="1">
    <citation type="journal article" date="2002" name="Nature">
        <title>Comparison of the genomes of two Xanthomonas pathogens with differing host specificities.</title>
        <authorList>
            <person name="da Silva A.C.R."/>
            <person name="Ferro J.A."/>
            <person name="Reinach F.C."/>
            <person name="Farah C.S."/>
            <person name="Furlan L.R."/>
            <person name="Quaggio R.B."/>
            <person name="Monteiro-Vitorello C.B."/>
            <person name="Van Sluys M.A."/>
            <person name="Almeida N.F. Jr."/>
            <person name="Alves L.M.C."/>
            <person name="do Amaral A.M."/>
            <person name="Bertolini M.C."/>
            <person name="Camargo L.E.A."/>
            <person name="Camarotte G."/>
            <person name="Cannavan F."/>
            <person name="Cardozo J."/>
            <person name="Chambergo F."/>
            <person name="Ciapina L.P."/>
            <person name="Cicarelli R.M.B."/>
            <person name="Coutinho L.L."/>
            <person name="Cursino-Santos J.R."/>
            <person name="El-Dorry H."/>
            <person name="Faria J.B."/>
            <person name="Ferreira A.J.S."/>
            <person name="Ferreira R.C.C."/>
            <person name="Ferro M.I.T."/>
            <person name="Formighieri E.F."/>
            <person name="Franco M.C."/>
            <person name="Greggio C.C."/>
            <person name="Gruber A."/>
            <person name="Katsuyama A.M."/>
            <person name="Kishi L.T."/>
            <person name="Leite R.P."/>
            <person name="Lemos E.G.M."/>
            <person name="Lemos M.V.F."/>
            <person name="Locali E.C."/>
            <person name="Machado M.A."/>
            <person name="Madeira A.M.B.N."/>
            <person name="Martinez-Rossi N.M."/>
            <person name="Martins E.C."/>
            <person name="Meidanis J."/>
            <person name="Menck C.F.M."/>
            <person name="Miyaki C.Y."/>
            <person name="Moon D.H."/>
            <person name="Moreira L.M."/>
            <person name="Novo M.T.M."/>
            <person name="Okura V.K."/>
            <person name="Oliveira M.C."/>
            <person name="Oliveira V.R."/>
            <person name="Pereira H.A."/>
            <person name="Rossi A."/>
            <person name="Sena J.A.D."/>
            <person name="Silva C."/>
            <person name="de Souza R.F."/>
            <person name="Spinola L.A.F."/>
            <person name="Takita M.A."/>
            <person name="Tamura R.E."/>
            <person name="Teixeira E.C."/>
            <person name="Tezza R.I.D."/>
            <person name="Trindade dos Santos M."/>
            <person name="Truffi D."/>
            <person name="Tsai S.M."/>
            <person name="White F.F."/>
            <person name="Setubal J.C."/>
            <person name="Kitajima J.P."/>
        </authorList>
    </citation>
    <scope>NUCLEOTIDE SEQUENCE [LARGE SCALE GENOMIC DNA]</scope>
    <source>
        <strain>ATCC 33913 / DSM 3586 / NCPPB 528 / LMG 568 / P 25</strain>
    </source>
</reference>
<organism>
    <name type="scientific">Xanthomonas campestris pv. campestris (strain ATCC 33913 / DSM 3586 / NCPPB 528 / LMG 568 / P 25)</name>
    <dbReference type="NCBI Taxonomy" id="190485"/>
    <lineage>
        <taxon>Bacteria</taxon>
        <taxon>Pseudomonadati</taxon>
        <taxon>Pseudomonadota</taxon>
        <taxon>Gammaproteobacteria</taxon>
        <taxon>Lysobacterales</taxon>
        <taxon>Lysobacteraceae</taxon>
        <taxon>Xanthomonas</taxon>
    </lineage>
</organism>
<dbReference type="EC" id="2.5.1.31" evidence="1"/>
<dbReference type="EMBL" id="AE008922">
    <property type="protein sequence ID" value="AAM40667.1"/>
    <property type="molecule type" value="Genomic_DNA"/>
</dbReference>
<dbReference type="RefSeq" id="NP_636743.1">
    <property type="nucleotide sequence ID" value="NC_003902.1"/>
</dbReference>
<dbReference type="SMR" id="Q8PAV7"/>
<dbReference type="STRING" id="190485.XCC1369"/>
<dbReference type="EnsemblBacteria" id="AAM40667">
    <property type="protein sequence ID" value="AAM40667"/>
    <property type="gene ID" value="XCC1369"/>
</dbReference>
<dbReference type="KEGG" id="xcc:XCC1369"/>
<dbReference type="PATRIC" id="fig|190485.4.peg.1471"/>
<dbReference type="eggNOG" id="COG0020">
    <property type="taxonomic scope" value="Bacteria"/>
</dbReference>
<dbReference type="HOGENOM" id="CLU_038505_1_1_6"/>
<dbReference type="OrthoDB" id="4191603at2"/>
<dbReference type="Proteomes" id="UP000001010">
    <property type="component" value="Chromosome"/>
</dbReference>
<dbReference type="GO" id="GO:0005829">
    <property type="term" value="C:cytosol"/>
    <property type="evidence" value="ECO:0000318"/>
    <property type="project" value="GO_Central"/>
</dbReference>
<dbReference type="GO" id="GO:0008834">
    <property type="term" value="F:ditrans,polycis-undecaprenyl-diphosphate synthase [(2E,6E)-farnesyl-diphosphate specific] activity"/>
    <property type="evidence" value="ECO:0000318"/>
    <property type="project" value="GO_Central"/>
</dbReference>
<dbReference type="GO" id="GO:0000287">
    <property type="term" value="F:magnesium ion binding"/>
    <property type="evidence" value="ECO:0000318"/>
    <property type="project" value="GO_Central"/>
</dbReference>
<dbReference type="GO" id="GO:0071555">
    <property type="term" value="P:cell wall organization"/>
    <property type="evidence" value="ECO:0007669"/>
    <property type="project" value="UniProtKB-KW"/>
</dbReference>
<dbReference type="GO" id="GO:0009252">
    <property type="term" value="P:peptidoglycan biosynthetic process"/>
    <property type="evidence" value="ECO:0007669"/>
    <property type="project" value="UniProtKB-UniRule"/>
</dbReference>
<dbReference type="GO" id="GO:0016094">
    <property type="term" value="P:polyprenol biosynthetic process"/>
    <property type="evidence" value="ECO:0000318"/>
    <property type="project" value="GO_Central"/>
</dbReference>
<dbReference type="GO" id="GO:0008360">
    <property type="term" value="P:regulation of cell shape"/>
    <property type="evidence" value="ECO:0007669"/>
    <property type="project" value="UniProtKB-KW"/>
</dbReference>
<dbReference type="CDD" id="cd00475">
    <property type="entry name" value="Cis_IPPS"/>
    <property type="match status" value="1"/>
</dbReference>
<dbReference type="FunFam" id="3.40.1180.10:FF:000001">
    <property type="entry name" value="(2E,6E)-farnesyl-diphosphate-specific ditrans,polycis-undecaprenyl-diphosphate synthase"/>
    <property type="match status" value="1"/>
</dbReference>
<dbReference type="Gene3D" id="3.40.1180.10">
    <property type="entry name" value="Decaprenyl diphosphate synthase-like"/>
    <property type="match status" value="1"/>
</dbReference>
<dbReference type="HAMAP" id="MF_01139">
    <property type="entry name" value="ISPT"/>
    <property type="match status" value="1"/>
</dbReference>
<dbReference type="InterPro" id="IPR001441">
    <property type="entry name" value="UPP_synth-like"/>
</dbReference>
<dbReference type="InterPro" id="IPR018520">
    <property type="entry name" value="UPP_synth-like_CS"/>
</dbReference>
<dbReference type="InterPro" id="IPR036424">
    <property type="entry name" value="UPP_synth-like_sf"/>
</dbReference>
<dbReference type="NCBIfam" id="TIGR00055">
    <property type="entry name" value="uppS"/>
    <property type="match status" value="1"/>
</dbReference>
<dbReference type="PANTHER" id="PTHR10291:SF0">
    <property type="entry name" value="DEHYDRODOLICHYL DIPHOSPHATE SYNTHASE 2"/>
    <property type="match status" value="1"/>
</dbReference>
<dbReference type="PANTHER" id="PTHR10291">
    <property type="entry name" value="DEHYDRODOLICHYL DIPHOSPHATE SYNTHASE FAMILY MEMBER"/>
    <property type="match status" value="1"/>
</dbReference>
<dbReference type="Pfam" id="PF01255">
    <property type="entry name" value="Prenyltransf"/>
    <property type="match status" value="1"/>
</dbReference>
<dbReference type="SUPFAM" id="SSF64005">
    <property type="entry name" value="Undecaprenyl diphosphate synthase"/>
    <property type="match status" value="1"/>
</dbReference>
<dbReference type="PROSITE" id="PS01066">
    <property type="entry name" value="UPP_SYNTHASE"/>
    <property type="match status" value="1"/>
</dbReference>
<proteinExistence type="inferred from homology"/>